<name>DCMC_ANSAN</name>
<comment type="function">
    <text evidence="2">Catalyzes the conversion of malonyl-CoA to acetyl-CoA. In the fatty acid biosynthesis MCD selectively removes malonyl-CoA and thus assures that methyl-malonyl-CoA is the only chain elongating substrate for fatty acid synthase and that fatty acids with multiple methyl side chains are produced.</text>
</comment>
<comment type="catalytic activity">
    <reaction evidence="2">
        <text>malonyl-CoA + H(+) = acetyl-CoA + CO2</text>
        <dbReference type="Rhea" id="RHEA:18781"/>
        <dbReference type="ChEBI" id="CHEBI:15378"/>
        <dbReference type="ChEBI" id="CHEBI:16526"/>
        <dbReference type="ChEBI" id="CHEBI:57288"/>
        <dbReference type="ChEBI" id="CHEBI:57384"/>
        <dbReference type="EC" id="4.1.1.9"/>
    </reaction>
    <physiologicalReaction direction="left-to-right" evidence="2">
        <dbReference type="Rhea" id="RHEA:18782"/>
    </physiologicalReaction>
</comment>
<comment type="pathway">
    <text>Metabolic intermediate biosynthesis; acetyl-CoA biosynthesis; acetyl-CoA from malonyl-CoA: step 1/1.</text>
</comment>
<comment type="subcellular location">
    <subcellularLocation>
        <location evidence="4">Mitochondrion</location>
    </subcellularLocation>
    <subcellularLocation>
        <location evidence="4">Cytoplasm</location>
    </subcellularLocation>
    <subcellularLocation>
        <location evidence="4">Peroxisome</location>
    </subcellularLocation>
    <text>Mitochondrial in liver. Cytoplasmic in uropygial gland.</text>
</comment>
<comment type="alternative products">
    <event type="alternative promoter"/>
    <isoform>
        <id>P12617-1</id>
        <name>Mitochondrial</name>
        <sequence type="displayed"/>
    </isoform>
    <isoform>
        <id>P12617-2</id>
        <name>Cytoplasmic+peroxisomal</name>
        <sequence type="described" ref="VSP_018815"/>
    </isoform>
</comment>
<feature type="transit peptide" description="Mitochondrion" evidence="3">
    <location>
        <begin position="1"/>
        <end position="50"/>
    </location>
</feature>
<feature type="chain" id="PRO_0000021086" description="Malonyl-CoA decarboxylase, mitochondrial">
    <location>
        <begin position="51"/>
        <end position="504"/>
    </location>
</feature>
<feature type="region of interest" description="Alpha-helical domain" evidence="1">
    <location>
        <begin position="51"/>
        <end position="201"/>
    </location>
</feature>
<feature type="region of interest" description="Catalytic domain" evidence="1">
    <location>
        <begin position="202"/>
        <end position="504"/>
    </location>
</feature>
<feature type="short sequence motif" description="Microbody targeting signal" evidence="3">
    <location>
        <begin position="502"/>
        <end position="504"/>
    </location>
</feature>
<feature type="active site" description="Proton acceptor" evidence="1">
    <location>
        <position position="340"/>
    </location>
</feature>
<feature type="active site" description="Proton donor" evidence="1">
    <location>
        <position position="434"/>
    </location>
</feature>
<feature type="site" description="Essential for catalytic activity" evidence="1">
    <location>
        <position position="222"/>
    </location>
</feature>
<feature type="splice variant" id="VSP_018815" description="In isoform Cytoplasmic+peroxisomal." evidence="5">
    <location>
        <begin position="1"/>
        <end position="50"/>
    </location>
</feature>
<feature type="sequence conflict" description="In Ref. 2; AA sequence." evidence="6" ref="2">
    <location>
        <begin position="124"/>
        <end position="136"/>
    </location>
</feature>
<feature type="sequence conflict" description="In Ref. 2; AAA49317." evidence="6" ref="2">
    <original>V</original>
    <variation>L</variation>
    <location>
        <position position="140"/>
    </location>
</feature>
<accession>P12617</accession>
<protein>
    <recommendedName>
        <fullName>Malonyl-CoA decarboxylase, mitochondrial</fullName>
        <shortName>MCD</shortName>
        <ecNumber>4.1.1.9</ecNumber>
    </recommendedName>
</protein>
<keyword id="KW-0877">Alternative promoter usage</keyword>
<keyword id="KW-0963">Cytoplasm</keyword>
<keyword id="KW-0210">Decarboxylase</keyword>
<keyword id="KW-0903">Direct protein sequencing</keyword>
<keyword id="KW-0275">Fatty acid biosynthesis</keyword>
<keyword id="KW-0276">Fatty acid metabolism</keyword>
<keyword id="KW-0444">Lipid biosynthesis</keyword>
<keyword id="KW-0443">Lipid metabolism</keyword>
<keyword id="KW-0456">Lyase</keyword>
<keyword id="KW-0496">Mitochondrion</keyword>
<keyword id="KW-0576">Peroxisome</keyword>
<keyword id="KW-0809">Transit peptide</keyword>
<reference key="1">
    <citation type="journal article" date="1992" name="Arch. Biochem. Biophys.">
        <title>Cytoplasmic accumulation of a normally mitochondrial malonyl-CoA decarboxylase by the use of an alternate transcription start site.</title>
        <authorList>
            <person name="Courchesne-Smith C."/>
            <person name="Jang S.-H."/>
            <person name="Shi Q."/>
            <person name="Dewille J."/>
            <person name="Sasaki G."/>
            <person name="Kolattukudy P.E."/>
        </authorList>
    </citation>
    <scope>NUCLEOTIDE SEQUENCE [MRNA] (ISOFORMS MITOCHONDRIAL AND CYTOPLASMIC+PEROXISOMAL)</scope>
    <scope>ALTERNATIVE PROMOTER USAGE</scope>
    <scope>SUBCELLULAR LOCATION</scope>
    <source>
        <tissue>Uropygial gland</tissue>
    </source>
</reference>
<reference key="2">
    <citation type="journal article" date="1989" name="J. Biol. Chem.">
        <title>Molecular cloning, nucleotide sequence, and tissue distribution of malonyl-CoA decarboxylase.</title>
        <authorList>
            <person name="Jang S.-H."/>
            <person name="Cheesbrough T.M."/>
            <person name="Kolattukudy P.E."/>
        </authorList>
    </citation>
    <scope>NUCLEOTIDE SEQUENCE [MRNA] OF 74-504</scope>
    <scope>PARTIAL PROTEIN SEQUENCE</scope>
    <source>
        <tissue>Uropygial gland</tissue>
    </source>
</reference>
<dbReference type="EC" id="4.1.1.9"/>
<dbReference type="EMBL" id="L21171">
    <property type="protein sequence ID" value="AAA49317.1"/>
    <property type="status" value="ALT_SEQ"/>
    <property type="molecule type" value="mRNA"/>
</dbReference>
<dbReference type="PIR" id="A33313">
    <property type="entry name" value="A33313"/>
</dbReference>
<dbReference type="PIR" id="S27113">
    <property type="entry name" value="S27113"/>
</dbReference>
<dbReference type="SMR" id="P12617"/>
<dbReference type="UniPathway" id="UPA00340">
    <property type="reaction ID" value="UER00710"/>
</dbReference>
<dbReference type="GO" id="GO:0005759">
    <property type="term" value="C:mitochondrial matrix"/>
    <property type="evidence" value="ECO:0000250"/>
    <property type="project" value="UniProtKB"/>
</dbReference>
<dbReference type="GO" id="GO:0005782">
    <property type="term" value="C:peroxisomal matrix"/>
    <property type="evidence" value="ECO:0007669"/>
    <property type="project" value="TreeGrafter"/>
</dbReference>
<dbReference type="GO" id="GO:0050080">
    <property type="term" value="F:malonyl-CoA decarboxylase activity"/>
    <property type="evidence" value="ECO:0000250"/>
    <property type="project" value="UniProtKB"/>
</dbReference>
<dbReference type="GO" id="GO:0006085">
    <property type="term" value="P:acetyl-CoA biosynthetic process"/>
    <property type="evidence" value="ECO:0000250"/>
    <property type="project" value="UniProtKB"/>
</dbReference>
<dbReference type="GO" id="GO:0006633">
    <property type="term" value="P:fatty acid biosynthetic process"/>
    <property type="evidence" value="ECO:0007669"/>
    <property type="project" value="UniProtKB-KW"/>
</dbReference>
<dbReference type="GO" id="GO:2001294">
    <property type="term" value="P:malonyl-CoA catabolic process"/>
    <property type="evidence" value="ECO:0000250"/>
    <property type="project" value="UniProtKB"/>
</dbReference>
<dbReference type="GO" id="GO:0046321">
    <property type="term" value="P:positive regulation of fatty acid oxidation"/>
    <property type="evidence" value="ECO:0000250"/>
    <property type="project" value="UniProtKB"/>
</dbReference>
<dbReference type="FunFam" id="1.20.140.90:FF:000001">
    <property type="entry name" value="Malonyl-CoA decarboxylase, mitochondrial"/>
    <property type="match status" value="1"/>
</dbReference>
<dbReference type="FunFam" id="3.40.630.150:FF:000001">
    <property type="entry name" value="Malonyl-CoA decarboxylase, mitochondrial"/>
    <property type="match status" value="1"/>
</dbReference>
<dbReference type="Gene3D" id="3.40.630.150">
    <property type="entry name" value="Malonyl-CoA decarboxylase, catalytic domain"/>
    <property type="match status" value="1"/>
</dbReference>
<dbReference type="Gene3D" id="1.20.140.90">
    <property type="entry name" value="Malonyl-CoA decarboxylase, oligemerization domain"/>
    <property type="match status" value="1"/>
</dbReference>
<dbReference type="InterPro" id="IPR038917">
    <property type="entry name" value="Malonyl_CoA_deC"/>
</dbReference>
<dbReference type="InterPro" id="IPR007956">
    <property type="entry name" value="Malonyl_CoA_deC_C"/>
</dbReference>
<dbReference type="InterPro" id="IPR042303">
    <property type="entry name" value="Malonyl_CoA_deC_C_sf"/>
</dbReference>
<dbReference type="InterPro" id="IPR035372">
    <property type="entry name" value="MCD_N"/>
</dbReference>
<dbReference type="InterPro" id="IPR038351">
    <property type="entry name" value="MCD_N_sf"/>
</dbReference>
<dbReference type="PANTHER" id="PTHR28641">
    <property type="match status" value="1"/>
</dbReference>
<dbReference type="PANTHER" id="PTHR28641:SF1">
    <property type="entry name" value="MALONYL-COA DECARBOXYLASE, MITOCHONDRIAL"/>
    <property type="match status" value="1"/>
</dbReference>
<dbReference type="Pfam" id="PF05292">
    <property type="entry name" value="MCD"/>
    <property type="match status" value="1"/>
</dbReference>
<dbReference type="Pfam" id="PF17408">
    <property type="entry name" value="MCD_N"/>
    <property type="match status" value="1"/>
</dbReference>
<sequence length="504" mass="56690">MRGLRRGLSRLGPRLGPWAVPRSLRRVLRAAGPWRGQSSAGSVSERGGASMEEVLSRSVPLLPPYETKEKAPPPAERRSAEFVRYYRGLEAGSRRAELLGCLARDFGADHGRVAEFSAKVLQAREQEREQGALLQAEDRVRYYLTPRYRALFQHLGRLEGGLRFLVELRGDLVEGLAAKAVDGPHVKEMSGVLKNMLSEWFSTGFLNLERVTWQSPCEVLQKISDSEAVHPVRNWVDLKRRVGPYRRCYFFSHCAIPGEPLIILHVALTSDISSSIQSIVKDVESLETEDAEKITTAIFYSISLAQQGLQGVELGNHLIKRVVKELQKDLPQIEAFSSLSPIPGFTKWLVGLLSSQTKELGRNELFTESERQEISEITEDSTTETLKKLLTNSEWVKSEKLVKALHSPLMRLCAWYLYGEKHRGYALNPVANFHLQNGAELWRINWMGDTSPRGIAASCGMMVNYRYFLEDTASNSAAYLGTKHIKASEQVLSFVSQFQQNSKL</sequence>
<proteinExistence type="evidence at protein level"/>
<organism>
    <name type="scientific">Anser anser anser</name>
    <name type="common">Western greylag goose</name>
    <dbReference type="NCBI Taxonomy" id="8844"/>
    <lineage>
        <taxon>Eukaryota</taxon>
        <taxon>Metazoa</taxon>
        <taxon>Chordata</taxon>
        <taxon>Craniata</taxon>
        <taxon>Vertebrata</taxon>
        <taxon>Euteleostomi</taxon>
        <taxon>Archelosauria</taxon>
        <taxon>Archosauria</taxon>
        <taxon>Dinosauria</taxon>
        <taxon>Saurischia</taxon>
        <taxon>Theropoda</taxon>
        <taxon>Coelurosauria</taxon>
        <taxon>Aves</taxon>
        <taxon>Neognathae</taxon>
        <taxon>Galloanserae</taxon>
        <taxon>Anseriformes</taxon>
        <taxon>Anatidae</taxon>
        <taxon>Anserinae</taxon>
        <taxon>Anser</taxon>
    </lineage>
</organism>
<gene>
    <name type="primary">MLYCD</name>
</gene>
<evidence type="ECO:0000250" key="1"/>
<evidence type="ECO:0000250" key="2">
    <source>
        <dbReference type="UniProtKB" id="O95822"/>
    </source>
</evidence>
<evidence type="ECO:0000255" key="3"/>
<evidence type="ECO:0000269" key="4">
    <source>
    </source>
</evidence>
<evidence type="ECO:0000303" key="5">
    <source>
    </source>
</evidence>
<evidence type="ECO:0000305" key="6"/>